<keyword id="KW-1185">Reference proteome</keyword>
<keyword id="KW-0732">Signal</keyword>
<protein>
    <recommendedName>
        <fullName>Uncharacterized protein AF_0048</fullName>
    </recommendedName>
</protein>
<organism>
    <name type="scientific">Archaeoglobus fulgidus (strain ATCC 49558 / DSM 4304 / JCM 9628 / NBRC 100126 / VC-16)</name>
    <dbReference type="NCBI Taxonomy" id="224325"/>
    <lineage>
        <taxon>Archaea</taxon>
        <taxon>Methanobacteriati</taxon>
        <taxon>Methanobacteriota</taxon>
        <taxon>Archaeoglobi</taxon>
        <taxon>Archaeoglobales</taxon>
        <taxon>Archaeoglobaceae</taxon>
        <taxon>Archaeoglobus</taxon>
    </lineage>
</organism>
<gene>
    <name type="ordered locus">AF_0048</name>
</gene>
<reference key="1">
    <citation type="journal article" date="1997" name="Nature">
        <title>The complete genome sequence of the hyperthermophilic, sulphate-reducing archaeon Archaeoglobus fulgidus.</title>
        <authorList>
            <person name="Klenk H.-P."/>
            <person name="Clayton R.A."/>
            <person name="Tomb J.-F."/>
            <person name="White O."/>
            <person name="Nelson K.E."/>
            <person name="Ketchum K.A."/>
            <person name="Dodson R.J."/>
            <person name="Gwinn M.L."/>
            <person name="Hickey E.K."/>
            <person name="Peterson J.D."/>
            <person name="Richardson D.L."/>
            <person name="Kerlavage A.R."/>
            <person name="Graham D.E."/>
            <person name="Kyrpides N.C."/>
            <person name="Fleischmann R.D."/>
            <person name="Quackenbush J."/>
            <person name="Lee N.H."/>
            <person name="Sutton G.G."/>
            <person name="Gill S.R."/>
            <person name="Kirkness E.F."/>
            <person name="Dougherty B.A."/>
            <person name="McKenney K."/>
            <person name="Adams M.D."/>
            <person name="Loftus B.J."/>
            <person name="Peterson S.N."/>
            <person name="Reich C.I."/>
            <person name="McNeil L.K."/>
            <person name="Badger J.H."/>
            <person name="Glodek A."/>
            <person name="Zhou L."/>
            <person name="Overbeek R."/>
            <person name="Gocayne J.D."/>
            <person name="Weidman J.F."/>
            <person name="McDonald L.A."/>
            <person name="Utterback T.R."/>
            <person name="Cotton M.D."/>
            <person name="Spriggs T."/>
            <person name="Artiach P."/>
            <person name="Kaine B.P."/>
            <person name="Sykes S.M."/>
            <person name="Sadow P.W."/>
            <person name="D'Andrea K.P."/>
            <person name="Bowman C."/>
            <person name="Fujii C."/>
            <person name="Garland S.A."/>
            <person name="Mason T.M."/>
            <person name="Olsen G.J."/>
            <person name="Fraser C.M."/>
            <person name="Smith H.O."/>
            <person name="Woese C.R."/>
            <person name="Venter J.C."/>
        </authorList>
    </citation>
    <scope>NUCLEOTIDE SEQUENCE [LARGE SCALE GENOMIC DNA]</scope>
    <source>
        <strain>ATCC 49558 / DSM 4304 / JCM 9628 / NBRC 100126 / VC-16</strain>
    </source>
</reference>
<sequence>MRVIIVIMMVVFVVVGTSSGQEIILTSEKLINSAYQLQEIHEKVGIQSDIVTVEQIWDSYSPVEDPLVSGYSTEQVYDSYNYTLALKIISFLRTVNASYVTILGDADIVPPSYYAKLIFYEPFPTDFFYASPDYDLKPDFAVGRIPAGSEDEAEKVLGKINDWLSDIGSGNYVNAALIGMRIYAAPYSIERETIDDYEVWQGETAVKLLEDLGFTETFNTTIALQSDEEWTSVKQTFDEALSGGYGVVFHVGHGIPYALDSDDGGMYTTRYMNMLDKRRPLLPVVLSSGCSAAAFDEEIRDIYLPNWAPGLWSEFLLTNDAGGIAFVGFTGTTGSDYQFSESDGFVEVAGVKHADNILIKTLKNLPGNRLGDAFKAALEEVKSEENIKLNPSTEVEEWKLRVYLEAETKFLET</sequence>
<name>Y048_ARCFU</name>
<feature type="signal peptide" evidence="1">
    <location>
        <begin position="1"/>
        <end position="20"/>
    </location>
</feature>
<feature type="chain" id="PRO_0000013635" description="Uncharacterized protein AF_0048">
    <location>
        <begin position="21"/>
        <end position="413"/>
    </location>
</feature>
<proteinExistence type="inferred from homology"/>
<accession>O30188</accession>
<evidence type="ECO:0000255" key="1"/>
<dbReference type="EMBL" id="AE000782">
    <property type="protein sequence ID" value="AAB91184.1"/>
    <property type="molecule type" value="Genomic_DNA"/>
</dbReference>
<dbReference type="PIR" id="H69255">
    <property type="entry name" value="H69255"/>
</dbReference>
<dbReference type="RefSeq" id="WP_010877562.1">
    <property type="nucleotide sequence ID" value="NC_000917.1"/>
</dbReference>
<dbReference type="STRING" id="224325.AF_0048"/>
<dbReference type="PaxDb" id="224325-AF_0048"/>
<dbReference type="EnsemblBacteria" id="AAB91184">
    <property type="protein sequence ID" value="AAB91184"/>
    <property type="gene ID" value="AF_0048"/>
</dbReference>
<dbReference type="GeneID" id="1483257"/>
<dbReference type="KEGG" id="afu:AF_0048"/>
<dbReference type="eggNOG" id="arCOG07760">
    <property type="taxonomic scope" value="Archaea"/>
</dbReference>
<dbReference type="HOGENOM" id="CLU_664988_0_0_2"/>
<dbReference type="OrthoDB" id="137961at2157"/>
<dbReference type="Proteomes" id="UP000002199">
    <property type="component" value="Chromosome"/>
</dbReference>
<dbReference type="GO" id="GO:0008234">
    <property type="term" value="F:cysteine-type peptidase activity"/>
    <property type="evidence" value="ECO:0007669"/>
    <property type="project" value="InterPro"/>
</dbReference>
<dbReference type="GO" id="GO:0006508">
    <property type="term" value="P:proteolysis"/>
    <property type="evidence" value="ECO:0007669"/>
    <property type="project" value="InterPro"/>
</dbReference>
<dbReference type="Gene3D" id="3.40.50.1460">
    <property type="match status" value="1"/>
</dbReference>
<dbReference type="Gene3D" id="3.40.50.10390">
    <property type="entry name" value="Gingipain r, domain 1"/>
    <property type="match status" value="1"/>
</dbReference>
<dbReference type="InterPro" id="IPR029030">
    <property type="entry name" value="Caspase-like_dom_sf"/>
</dbReference>
<dbReference type="InterPro" id="IPR001769">
    <property type="entry name" value="Gingipain"/>
</dbReference>
<dbReference type="InterPro" id="IPR029031">
    <property type="entry name" value="Gingipain_N_sf"/>
</dbReference>
<dbReference type="Pfam" id="PF01364">
    <property type="entry name" value="Peptidase_C25"/>
    <property type="match status" value="1"/>
</dbReference>
<dbReference type="SUPFAM" id="SSF52129">
    <property type="entry name" value="Caspase-like"/>
    <property type="match status" value="1"/>
</dbReference>